<reference key="1">
    <citation type="journal article" date="2006" name="Proc. Natl. Acad. Sci. U.S.A.">
        <title>The partitioned Rhizobium etli genome: genetic and metabolic redundancy in seven interacting replicons.</title>
        <authorList>
            <person name="Gonzalez V."/>
            <person name="Santamaria R.I."/>
            <person name="Bustos P."/>
            <person name="Hernandez-Gonzalez I."/>
            <person name="Medrano-Soto A."/>
            <person name="Moreno-Hagelsieb G."/>
            <person name="Janga S.C."/>
            <person name="Ramirez M.A."/>
            <person name="Jimenez-Jacinto V."/>
            <person name="Collado-Vides J."/>
            <person name="Davila G."/>
        </authorList>
    </citation>
    <scope>NUCLEOTIDE SEQUENCE [LARGE SCALE GENOMIC DNA]</scope>
    <source>
        <strain>ATCC 51251 / DSM 11541 / JCM 21823 / NBRC 15573 / CFN 42</strain>
    </source>
</reference>
<protein>
    <recommendedName>
        <fullName evidence="1">Xylose isomerase</fullName>
        <ecNumber evidence="1">5.3.1.5</ecNumber>
    </recommendedName>
</protein>
<keyword id="KW-0119">Carbohydrate metabolism</keyword>
<keyword id="KW-0963">Cytoplasm</keyword>
<keyword id="KW-0413">Isomerase</keyword>
<keyword id="KW-0460">Magnesium</keyword>
<keyword id="KW-0479">Metal-binding</keyword>
<keyword id="KW-1185">Reference proteome</keyword>
<keyword id="KW-0859">Xylose metabolism</keyword>
<gene>
    <name evidence="1" type="primary">xylA</name>
    <name type="ordered locus">RHE_CH03648</name>
</gene>
<proteinExistence type="inferred from homology"/>
<feature type="chain" id="PRO_1000026450" description="Xylose isomerase">
    <location>
        <begin position="1"/>
        <end position="436"/>
    </location>
</feature>
<feature type="active site" evidence="1">
    <location>
        <position position="100"/>
    </location>
</feature>
<feature type="active site" evidence="1">
    <location>
        <position position="103"/>
    </location>
</feature>
<feature type="binding site" evidence="1">
    <location>
        <position position="231"/>
    </location>
    <ligand>
        <name>Mg(2+)</name>
        <dbReference type="ChEBI" id="CHEBI:18420"/>
        <label>1</label>
    </ligand>
</feature>
<feature type="binding site" evidence="1">
    <location>
        <position position="267"/>
    </location>
    <ligand>
        <name>Mg(2+)</name>
        <dbReference type="ChEBI" id="CHEBI:18420"/>
        <label>1</label>
    </ligand>
</feature>
<feature type="binding site" evidence="1">
    <location>
        <position position="267"/>
    </location>
    <ligand>
        <name>Mg(2+)</name>
        <dbReference type="ChEBI" id="CHEBI:18420"/>
        <label>2</label>
    </ligand>
</feature>
<feature type="binding site" evidence="1">
    <location>
        <position position="270"/>
    </location>
    <ligand>
        <name>Mg(2+)</name>
        <dbReference type="ChEBI" id="CHEBI:18420"/>
        <label>2</label>
    </ligand>
</feature>
<feature type="binding site" evidence="1">
    <location>
        <position position="295"/>
    </location>
    <ligand>
        <name>Mg(2+)</name>
        <dbReference type="ChEBI" id="CHEBI:18420"/>
        <label>1</label>
    </ligand>
</feature>
<feature type="binding site" evidence="1">
    <location>
        <position position="306"/>
    </location>
    <ligand>
        <name>Mg(2+)</name>
        <dbReference type="ChEBI" id="CHEBI:18420"/>
        <label>2</label>
    </ligand>
</feature>
<feature type="binding site" evidence="1">
    <location>
        <position position="308"/>
    </location>
    <ligand>
        <name>Mg(2+)</name>
        <dbReference type="ChEBI" id="CHEBI:18420"/>
        <label>2</label>
    </ligand>
</feature>
<feature type="binding site" evidence="1">
    <location>
        <position position="338"/>
    </location>
    <ligand>
        <name>Mg(2+)</name>
        <dbReference type="ChEBI" id="CHEBI:18420"/>
        <label>1</label>
    </ligand>
</feature>
<dbReference type="EC" id="5.3.1.5" evidence="1"/>
<dbReference type="EMBL" id="CP000133">
    <property type="protein sequence ID" value="ABC92403.1"/>
    <property type="molecule type" value="Genomic_DNA"/>
</dbReference>
<dbReference type="RefSeq" id="WP_011426861.1">
    <property type="nucleotide sequence ID" value="NC_007761.1"/>
</dbReference>
<dbReference type="SMR" id="Q2K433"/>
<dbReference type="KEGG" id="ret:RHE_CH03648"/>
<dbReference type="eggNOG" id="COG2115">
    <property type="taxonomic scope" value="Bacteria"/>
</dbReference>
<dbReference type="HOGENOM" id="CLU_037261_1_0_5"/>
<dbReference type="OrthoDB" id="9763981at2"/>
<dbReference type="Proteomes" id="UP000001936">
    <property type="component" value="Chromosome"/>
</dbReference>
<dbReference type="GO" id="GO:0005737">
    <property type="term" value="C:cytoplasm"/>
    <property type="evidence" value="ECO:0007669"/>
    <property type="project" value="UniProtKB-SubCell"/>
</dbReference>
<dbReference type="GO" id="GO:0000287">
    <property type="term" value="F:magnesium ion binding"/>
    <property type="evidence" value="ECO:0007669"/>
    <property type="project" value="UniProtKB-UniRule"/>
</dbReference>
<dbReference type="GO" id="GO:0009045">
    <property type="term" value="F:xylose isomerase activity"/>
    <property type="evidence" value="ECO:0007669"/>
    <property type="project" value="UniProtKB-UniRule"/>
</dbReference>
<dbReference type="GO" id="GO:0042732">
    <property type="term" value="P:D-xylose metabolic process"/>
    <property type="evidence" value="ECO:0007669"/>
    <property type="project" value="UniProtKB-UniRule"/>
</dbReference>
<dbReference type="FunFam" id="3.20.20.150:FF:000002">
    <property type="entry name" value="Xylose isomerase"/>
    <property type="match status" value="1"/>
</dbReference>
<dbReference type="Gene3D" id="3.20.20.150">
    <property type="entry name" value="Divalent-metal-dependent TIM barrel enzymes"/>
    <property type="match status" value="1"/>
</dbReference>
<dbReference type="HAMAP" id="MF_00455">
    <property type="entry name" value="Xylose_isom_A"/>
    <property type="match status" value="1"/>
</dbReference>
<dbReference type="InterPro" id="IPR036237">
    <property type="entry name" value="Xyl_isomerase-like_sf"/>
</dbReference>
<dbReference type="InterPro" id="IPR013022">
    <property type="entry name" value="Xyl_isomerase-like_TIM-brl"/>
</dbReference>
<dbReference type="InterPro" id="IPR013452">
    <property type="entry name" value="Xylose_isom_bac"/>
</dbReference>
<dbReference type="InterPro" id="IPR001998">
    <property type="entry name" value="Xylose_isomerase"/>
</dbReference>
<dbReference type="NCBIfam" id="NF003998">
    <property type="entry name" value="PRK05474.1"/>
    <property type="match status" value="1"/>
</dbReference>
<dbReference type="NCBIfam" id="TIGR02630">
    <property type="entry name" value="xylose_isom_A"/>
    <property type="match status" value="1"/>
</dbReference>
<dbReference type="PANTHER" id="PTHR48408">
    <property type="match status" value="1"/>
</dbReference>
<dbReference type="PANTHER" id="PTHR48408:SF1">
    <property type="entry name" value="XYLOSE ISOMERASE"/>
    <property type="match status" value="1"/>
</dbReference>
<dbReference type="Pfam" id="PF01261">
    <property type="entry name" value="AP_endonuc_2"/>
    <property type="match status" value="1"/>
</dbReference>
<dbReference type="PRINTS" id="PR00688">
    <property type="entry name" value="XYLOSISMRASE"/>
</dbReference>
<dbReference type="SUPFAM" id="SSF51658">
    <property type="entry name" value="Xylose isomerase-like"/>
    <property type="match status" value="1"/>
</dbReference>
<dbReference type="PROSITE" id="PS51415">
    <property type="entry name" value="XYLOSE_ISOMERASE"/>
    <property type="match status" value="1"/>
</dbReference>
<evidence type="ECO:0000255" key="1">
    <source>
        <dbReference type="HAMAP-Rule" id="MF_00455"/>
    </source>
</evidence>
<sequence>MSTGFFGDIQKIKYEGPDSTNPLAFRYYQPDEIVLGKRMEDHLRFAVAYWHTFTWPGGDPFGGQTFLRPWFEDTMKAAKLKADVAFEFFSLLGAPYYCFHDADVRPEGKNFAENTKNLNEIVDYFAEKQAATGTKLLWGTANLFSNRRYMSGAATNPDPDVFAFAAATVKTCIDATQKLGGENYVLWGGREGYETLLNTDLKRELDQLGRFLNLVVEYKHKIGFKGTILIEPKPQEPTKHQYDYDVATVYGFLKKHGLENEVKVNIEQGHAILAGHSFEHELALANALGIFGSIDMNRNDYQSGWDTDQFPNNVPEMALAYYHVLAGGGFKTGGTNFDSKLRRQSLDPADLLIGHIGGMDCCARGLKAAAKMIEDKALSQPLADRYAGWESVEAQKLFRGEYSLDEIANWVESKDVNPQPKSGKQELLENVVNRYV</sequence>
<organism>
    <name type="scientific">Rhizobium etli (strain ATCC 51251 / DSM 11541 / JCM 21823 / NBRC 15573 / CFN 42)</name>
    <dbReference type="NCBI Taxonomy" id="347834"/>
    <lineage>
        <taxon>Bacteria</taxon>
        <taxon>Pseudomonadati</taxon>
        <taxon>Pseudomonadota</taxon>
        <taxon>Alphaproteobacteria</taxon>
        <taxon>Hyphomicrobiales</taxon>
        <taxon>Rhizobiaceae</taxon>
        <taxon>Rhizobium/Agrobacterium group</taxon>
        <taxon>Rhizobium</taxon>
    </lineage>
</organism>
<accession>Q2K433</accession>
<name>XYLA_RHIEC</name>
<comment type="catalytic activity">
    <reaction evidence="1">
        <text>alpha-D-xylose = alpha-D-xylulofuranose</text>
        <dbReference type="Rhea" id="RHEA:22816"/>
        <dbReference type="ChEBI" id="CHEBI:28518"/>
        <dbReference type="ChEBI" id="CHEBI:188998"/>
        <dbReference type="EC" id="5.3.1.5"/>
    </reaction>
</comment>
<comment type="cofactor">
    <cofactor evidence="1">
        <name>Mg(2+)</name>
        <dbReference type="ChEBI" id="CHEBI:18420"/>
    </cofactor>
    <text evidence="1">Binds 2 magnesium ions per subunit.</text>
</comment>
<comment type="subunit">
    <text evidence="1">Homotetramer.</text>
</comment>
<comment type="subcellular location">
    <subcellularLocation>
        <location evidence="1">Cytoplasm</location>
    </subcellularLocation>
</comment>
<comment type="similarity">
    <text evidence="1">Belongs to the xylose isomerase family.</text>
</comment>